<protein>
    <recommendedName>
        <fullName>Glycerol-3-phosphate dehydrogenase [NAD(+)] 1</fullName>
        <ecNumber evidence="4">1.1.1.8</ecNumber>
    </recommendedName>
    <alternativeName>
        <fullName>GPDH-C</fullName>
        <shortName>GPD-C</shortName>
    </alternativeName>
</protein>
<accession>P21696</accession>
<accession>O94310</accession>
<accession>P78927</accession>
<gene>
    <name type="primary">gpd1</name>
    <name type="ORF">SPBC215.05</name>
</gene>
<keyword id="KW-0963">Cytoplasm</keyword>
<keyword id="KW-0520">NAD</keyword>
<keyword id="KW-0560">Oxidoreductase</keyword>
<keyword id="KW-0597">Phosphoprotein</keyword>
<keyword id="KW-1185">Reference proteome</keyword>
<dbReference type="EC" id="1.1.1.8" evidence="4"/>
<dbReference type="EMBL" id="X56162">
    <property type="protein sequence ID" value="CAA39630.1"/>
    <property type="molecule type" value="Genomic_DNA"/>
</dbReference>
<dbReference type="EMBL" id="CU329671">
    <property type="protein sequence ID" value="CAA22119.1"/>
    <property type="molecule type" value="Genomic_DNA"/>
</dbReference>
<dbReference type="EMBL" id="D50796">
    <property type="protein sequence ID" value="BAA09424.1"/>
    <property type="molecule type" value="Genomic_DNA"/>
</dbReference>
<dbReference type="PIR" id="T39895">
    <property type="entry name" value="T39895"/>
</dbReference>
<dbReference type="RefSeq" id="NP_596682.1">
    <property type="nucleotide sequence ID" value="NM_001022605.2"/>
</dbReference>
<dbReference type="SMR" id="P21696"/>
<dbReference type="BioGRID" id="276983">
    <property type="interactions" value="51"/>
</dbReference>
<dbReference type="FunCoup" id="P21696">
    <property type="interactions" value="377"/>
</dbReference>
<dbReference type="STRING" id="284812.P21696"/>
<dbReference type="iPTMnet" id="P21696"/>
<dbReference type="SwissPalm" id="P21696"/>
<dbReference type="PaxDb" id="4896-SPBC215.05.1"/>
<dbReference type="EnsemblFungi" id="SPBC215.05.1">
    <property type="protein sequence ID" value="SPBC215.05.1:pep"/>
    <property type="gene ID" value="SPBC215.05"/>
</dbReference>
<dbReference type="GeneID" id="2540455"/>
<dbReference type="KEGG" id="spo:2540455"/>
<dbReference type="PomBase" id="SPBC215.05">
    <property type="gene designation" value="gpd1"/>
</dbReference>
<dbReference type="VEuPathDB" id="FungiDB:SPBC215.05"/>
<dbReference type="eggNOG" id="KOG2711">
    <property type="taxonomic scope" value="Eukaryota"/>
</dbReference>
<dbReference type="HOGENOM" id="CLU_033449_2_2_1"/>
<dbReference type="InParanoid" id="P21696"/>
<dbReference type="OMA" id="ICYEGRS"/>
<dbReference type="PhylomeDB" id="P21696"/>
<dbReference type="Reactome" id="R-SPO-1483166">
    <property type="pathway name" value="Synthesis of PA"/>
</dbReference>
<dbReference type="PRO" id="PR:P21696"/>
<dbReference type="Proteomes" id="UP000002485">
    <property type="component" value="Chromosome II"/>
</dbReference>
<dbReference type="GO" id="GO:0005829">
    <property type="term" value="C:cytosol"/>
    <property type="evidence" value="ECO:0007005"/>
    <property type="project" value="PomBase"/>
</dbReference>
<dbReference type="GO" id="GO:0005634">
    <property type="term" value="C:nucleus"/>
    <property type="evidence" value="ECO:0007005"/>
    <property type="project" value="PomBase"/>
</dbReference>
<dbReference type="GO" id="GO:0141152">
    <property type="term" value="F:glycerol-3-phosphate dehydrogenase (NAD+) activity"/>
    <property type="evidence" value="ECO:0000315"/>
    <property type="project" value="PomBase"/>
</dbReference>
<dbReference type="GO" id="GO:0051287">
    <property type="term" value="F:NAD binding"/>
    <property type="evidence" value="ECO:0007669"/>
    <property type="project" value="InterPro"/>
</dbReference>
<dbReference type="GO" id="GO:0042803">
    <property type="term" value="F:protein homodimerization activity"/>
    <property type="evidence" value="ECO:0007669"/>
    <property type="project" value="InterPro"/>
</dbReference>
<dbReference type="GO" id="GO:0071470">
    <property type="term" value="P:cellular response to osmotic stress"/>
    <property type="evidence" value="ECO:0000270"/>
    <property type="project" value="PomBase"/>
</dbReference>
<dbReference type="GO" id="GO:0006114">
    <property type="term" value="P:glycerol biosynthetic process"/>
    <property type="evidence" value="ECO:0000315"/>
    <property type="project" value="PomBase"/>
</dbReference>
<dbReference type="GO" id="GO:0046168">
    <property type="term" value="P:glycerol-3-phosphate catabolic process"/>
    <property type="evidence" value="ECO:0007669"/>
    <property type="project" value="InterPro"/>
</dbReference>
<dbReference type="GO" id="GO:0006072">
    <property type="term" value="P:glycerol-3-phosphate metabolic process"/>
    <property type="evidence" value="ECO:0000318"/>
    <property type="project" value="GO_Central"/>
</dbReference>
<dbReference type="FunFam" id="1.10.1040.10:FF:000004">
    <property type="entry name" value="Glycerol-3-phosphate dehydrogenase [NAD(+)]"/>
    <property type="match status" value="1"/>
</dbReference>
<dbReference type="FunFam" id="3.40.50.720:FF:000549">
    <property type="entry name" value="Glycerol-3-phosphate dehydrogenase [NAD(+)]"/>
    <property type="match status" value="1"/>
</dbReference>
<dbReference type="Gene3D" id="1.10.1040.10">
    <property type="entry name" value="N-(1-d-carboxylethyl)-l-norvaline Dehydrogenase, domain 2"/>
    <property type="match status" value="1"/>
</dbReference>
<dbReference type="Gene3D" id="3.40.50.720">
    <property type="entry name" value="NAD(P)-binding Rossmann-like Domain"/>
    <property type="match status" value="1"/>
</dbReference>
<dbReference type="InterPro" id="IPR008927">
    <property type="entry name" value="6-PGluconate_DH-like_C_sf"/>
</dbReference>
<dbReference type="InterPro" id="IPR013328">
    <property type="entry name" value="6PGD_dom2"/>
</dbReference>
<dbReference type="InterPro" id="IPR006168">
    <property type="entry name" value="G3P_DH_NAD-dep"/>
</dbReference>
<dbReference type="InterPro" id="IPR006109">
    <property type="entry name" value="G3P_DH_NAD-dep_C"/>
</dbReference>
<dbReference type="InterPro" id="IPR017751">
    <property type="entry name" value="G3P_DH_NAD-dep_euk"/>
</dbReference>
<dbReference type="InterPro" id="IPR011128">
    <property type="entry name" value="G3P_DH_NAD-dep_N"/>
</dbReference>
<dbReference type="InterPro" id="IPR036291">
    <property type="entry name" value="NAD(P)-bd_dom_sf"/>
</dbReference>
<dbReference type="NCBIfam" id="TIGR03376">
    <property type="entry name" value="glycerol3P_DH"/>
    <property type="match status" value="1"/>
</dbReference>
<dbReference type="PANTHER" id="PTHR11728">
    <property type="entry name" value="GLYCEROL-3-PHOSPHATE DEHYDROGENASE"/>
    <property type="match status" value="1"/>
</dbReference>
<dbReference type="PANTHER" id="PTHR11728:SF43">
    <property type="entry name" value="GLYCEROL-3-PHOSPHATE DEHYDROGENASE [NAD(+)] 1"/>
    <property type="match status" value="1"/>
</dbReference>
<dbReference type="Pfam" id="PF07479">
    <property type="entry name" value="NAD_Gly3P_dh_C"/>
    <property type="match status" value="1"/>
</dbReference>
<dbReference type="Pfam" id="PF01210">
    <property type="entry name" value="NAD_Gly3P_dh_N"/>
    <property type="match status" value="1"/>
</dbReference>
<dbReference type="PIRSF" id="PIRSF000114">
    <property type="entry name" value="Glycerol-3-P_dh"/>
    <property type="match status" value="1"/>
</dbReference>
<dbReference type="PRINTS" id="PR00077">
    <property type="entry name" value="GPDHDRGNASE"/>
</dbReference>
<dbReference type="SUPFAM" id="SSF48179">
    <property type="entry name" value="6-phosphogluconate dehydrogenase C-terminal domain-like"/>
    <property type="match status" value="1"/>
</dbReference>
<dbReference type="SUPFAM" id="SSF51735">
    <property type="entry name" value="NAD(P)-binding Rossmann-fold domains"/>
    <property type="match status" value="1"/>
</dbReference>
<dbReference type="PROSITE" id="PS00957">
    <property type="entry name" value="NAD_G3PDH"/>
    <property type="match status" value="1"/>
</dbReference>
<comment type="catalytic activity">
    <reaction evidence="4">
        <text>sn-glycerol 3-phosphate + NAD(+) = dihydroxyacetone phosphate + NADH + H(+)</text>
        <dbReference type="Rhea" id="RHEA:11092"/>
        <dbReference type="ChEBI" id="CHEBI:15378"/>
        <dbReference type="ChEBI" id="CHEBI:57540"/>
        <dbReference type="ChEBI" id="CHEBI:57597"/>
        <dbReference type="ChEBI" id="CHEBI:57642"/>
        <dbReference type="ChEBI" id="CHEBI:57945"/>
        <dbReference type="EC" id="1.1.1.8"/>
    </reaction>
</comment>
<comment type="subcellular location">
    <subcellularLocation>
        <location>Cytoplasm</location>
    </subcellularLocation>
</comment>
<comment type="similarity">
    <text evidence="3">Belongs to the NAD-dependent glycerol-3-phosphate dehydrogenase family.</text>
</comment>
<organism>
    <name type="scientific">Schizosaccharomyces pombe (strain 972 / ATCC 24843)</name>
    <name type="common">Fission yeast</name>
    <dbReference type="NCBI Taxonomy" id="284812"/>
    <lineage>
        <taxon>Eukaryota</taxon>
        <taxon>Fungi</taxon>
        <taxon>Dikarya</taxon>
        <taxon>Ascomycota</taxon>
        <taxon>Taphrinomycotina</taxon>
        <taxon>Schizosaccharomycetes</taxon>
        <taxon>Schizosaccharomycetales</taxon>
        <taxon>Schizosaccharomycetaceae</taxon>
        <taxon>Schizosaccharomyces</taxon>
    </lineage>
</organism>
<name>GPD1_SCHPO</name>
<evidence type="ECO:0000250" key="1"/>
<evidence type="ECO:0000269" key="2">
    <source>
    </source>
</evidence>
<evidence type="ECO:0000305" key="3"/>
<evidence type="ECO:0000305" key="4">
    <source>
    </source>
</evidence>
<sequence length="385" mass="41995">MSGYGQQGVSAANIDSIRPKKRLSIGVVGSGNWGTAIAKICGENARAHGHHFRSKVRMWVFEEEIEYKGEKRKLTEVFNEAHENVKYLPGIECPPNVIAVPDVREVARRADILVFVVPHQFIERVCDQMVGLIRPGAVGISCIKGVAVSKEGVRLYSEVISEKLGIYCGVLSGANVANEVAREQFCETTIGFNPPNEVDIPREQIAAVFDRPYFSVVSVDDVAGVALGGALKNVVAMAVGFADGLEWGGNTKAAIMRRGLLEMQKFATTFFDSDPRTMVEQSCGIADLVTSCLGGRNNRCAEAFVKTGKSLETLEKELLGGQLLQGAATSKDVHEFLLTKDMVKDFPLFTAVYNISYEDMDPKDLIIVLQPLKEDSENEGGTETE</sequence>
<reference key="1">
    <citation type="journal article" date="1990" name="Nucleic Acids Res.">
        <title>Glycerol-3-phosphate dehydrogenase homologue from Schizosaccharomyces pombe.</title>
        <authorList>
            <person name="Pidoux A.L."/>
            <person name="Fawell E.H."/>
            <person name="Armstrong J."/>
        </authorList>
    </citation>
    <scope>NUCLEOTIDE SEQUENCE [GENOMIC DNA]</scope>
</reference>
<reference key="2">
    <citation type="journal article" date="2002" name="Nature">
        <title>The genome sequence of Schizosaccharomyces pombe.</title>
        <authorList>
            <person name="Wood V."/>
            <person name="Gwilliam R."/>
            <person name="Rajandream M.A."/>
            <person name="Lyne M.H."/>
            <person name="Lyne R."/>
            <person name="Stewart A."/>
            <person name="Sgouros J.G."/>
            <person name="Peat N."/>
            <person name="Hayles J."/>
            <person name="Baker S.G."/>
            <person name="Basham D."/>
            <person name="Bowman S."/>
            <person name="Brooks K."/>
            <person name="Brown D."/>
            <person name="Brown S."/>
            <person name="Chillingworth T."/>
            <person name="Churcher C.M."/>
            <person name="Collins M."/>
            <person name="Connor R."/>
            <person name="Cronin A."/>
            <person name="Davis P."/>
            <person name="Feltwell T."/>
            <person name="Fraser A."/>
            <person name="Gentles S."/>
            <person name="Goble A."/>
            <person name="Hamlin N."/>
            <person name="Harris D.E."/>
            <person name="Hidalgo J."/>
            <person name="Hodgson G."/>
            <person name="Holroyd S."/>
            <person name="Hornsby T."/>
            <person name="Howarth S."/>
            <person name="Huckle E.J."/>
            <person name="Hunt S."/>
            <person name="Jagels K."/>
            <person name="James K.D."/>
            <person name="Jones L."/>
            <person name="Jones M."/>
            <person name="Leather S."/>
            <person name="McDonald S."/>
            <person name="McLean J."/>
            <person name="Mooney P."/>
            <person name="Moule S."/>
            <person name="Mungall K.L."/>
            <person name="Murphy L.D."/>
            <person name="Niblett D."/>
            <person name="Odell C."/>
            <person name="Oliver K."/>
            <person name="O'Neil S."/>
            <person name="Pearson D."/>
            <person name="Quail M.A."/>
            <person name="Rabbinowitsch E."/>
            <person name="Rutherford K.M."/>
            <person name="Rutter S."/>
            <person name="Saunders D."/>
            <person name="Seeger K."/>
            <person name="Sharp S."/>
            <person name="Skelton J."/>
            <person name="Simmonds M.N."/>
            <person name="Squares R."/>
            <person name="Squares S."/>
            <person name="Stevens K."/>
            <person name="Taylor K."/>
            <person name="Taylor R.G."/>
            <person name="Tivey A."/>
            <person name="Walsh S.V."/>
            <person name="Warren T."/>
            <person name="Whitehead S."/>
            <person name="Woodward J.R."/>
            <person name="Volckaert G."/>
            <person name="Aert R."/>
            <person name="Robben J."/>
            <person name="Grymonprez B."/>
            <person name="Weltjens I."/>
            <person name="Vanstreels E."/>
            <person name="Rieger M."/>
            <person name="Schaefer M."/>
            <person name="Mueller-Auer S."/>
            <person name="Gabel C."/>
            <person name="Fuchs M."/>
            <person name="Duesterhoeft A."/>
            <person name="Fritzc C."/>
            <person name="Holzer E."/>
            <person name="Moestl D."/>
            <person name="Hilbert H."/>
            <person name="Borzym K."/>
            <person name="Langer I."/>
            <person name="Beck A."/>
            <person name="Lehrach H."/>
            <person name="Reinhardt R."/>
            <person name="Pohl T.M."/>
            <person name="Eger P."/>
            <person name="Zimmermann W."/>
            <person name="Wedler H."/>
            <person name="Wambutt R."/>
            <person name="Purnelle B."/>
            <person name="Goffeau A."/>
            <person name="Cadieu E."/>
            <person name="Dreano S."/>
            <person name="Gloux S."/>
            <person name="Lelaure V."/>
            <person name="Mottier S."/>
            <person name="Galibert F."/>
            <person name="Aves S.J."/>
            <person name="Xiang Z."/>
            <person name="Hunt C."/>
            <person name="Moore K."/>
            <person name="Hurst S.M."/>
            <person name="Lucas M."/>
            <person name="Rochet M."/>
            <person name="Gaillardin C."/>
            <person name="Tallada V.A."/>
            <person name="Garzon A."/>
            <person name="Thode G."/>
            <person name="Daga R.R."/>
            <person name="Cruzado L."/>
            <person name="Jimenez J."/>
            <person name="Sanchez M."/>
            <person name="del Rey F."/>
            <person name="Benito J."/>
            <person name="Dominguez A."/>
            <person name="Revuelta J.L."/>
            <person name="Moreno S."/>
            <person name="Armstrong J."/>
            <person name="Forsburg S.L."/>
            <person name="Cerutti L."/>
            <person name="Lowe T."/>
            <person name="McCombie W.R."/>
            <person name="Paulsen I."/>
            <person name="Potashkin J."/>
            <person name="Shpakovski G.V."/>
            <person name="Ussery D."/>
            <person name="Barrell B.G."/>
            <person name="Nurse P."/>
        </authorList>
    </citation>
    <scope>NUCLEOTIDE SEQUENCE [LARGE SCALE GENOMIC DNA]</scope>
    <source>
        <strain>972 / ATCC 24843</strain>
    </source>
</reference>
<reference key="3">
    <citation type="journal article" date="1995" name="Mol. Microbiol.">
        <title>Osmoregulation of fission yeast: cloning of two distinct genes encoding glycerol-3-phosphate dehydrogenase, one of which is responsible for osmotolerance for growth.</title>
        <authorList>
            <person name="Ohmiya R."/>
            <person name="Yamada H."/>
            <person name="Nakashima K."/>
            <person name="Aiba H."/>
            <person name="Mizuno T."/>
        </authorList>
    </citation>
    <scope>NUCLEOTIDE SEQUENCE [GENOMIC DNA] OF 1-77</scope>
    <scope>CATALYTIC ACTIVITY</scope>
</reference>
<reference key="4">
    <citation type="journal article" date="2008" name="J. Proteome Res.">
        <title>Phosphoproteome analysis of fission yeast.</title>
        <authorList>
            <person name="Wilson-Grady J.T."/>
            <person name="Villen J."/>
            <person name="Gygi S.P."/>
        </authorList>
    </citation>
    <scope>PHOSPHORYLATION [LARGE SCALE ANALYSIS] AT SER-376 AND THR-382</scope>
    <scope>IDENTIFICATION BY MASS SPECTROMETRY</scope>
</reference>
<feature type="chain" id="PRO_0000138095" description="Glycerol-3-phosphate dehydrogenase [NAD(+)] 1">
    <location>
        <begin position="1"/>
        <end position="385"/>
    </location>
</feature>
<feature type="active site" description="Proton acceptor" evidence="1">
    <location>
        <position position="232"/>
    </location>
</feature>
<feature type="binding site" evidence="1">
    <location>
        <begin position="29"/>
        <end position="34"/>
    </location>
    <ligand>
        <name>NAD(+)</name>
        <dbReference type="ChEBI" id="CHEBI:57540"/>
    </ligand>
</feature>
<feature type="binding site" evidence="1">
    <location>
        <position position="121"/>
    </location>
    <ligand>
        <name>NAD(+)</name>
        <dbReference type="ChEBI" id="CHEBI:57540"/>
    </ligand>
</feature>
<feature type="binding site" evidence="1">
    <location>
        <position position="144"/>
    </location>
    <ligand>
        <name>NAD(+)</name>
        <dbReference type="ChEBI" id="CHEBI:57540"/>
    </ligand>
</feature>
<feature type="binding site" evidence="1">
    <location>
        <position position="144"/>
    </location>
    <ligand>
        <name>substrate</name>
    </ligand>
</feature>
<feature type="binding site" evidence="1">
    <location>
        <position position="177"/>
    </location>
    <ligand>
        <name>NAD(+)</name>
        <dbReference type="ChEBI" id="CHEBI:57540"/>
    </ligand>
</feature>
<feature type="binding site" evidence="1">
    <location>
        <begin position="296"/>
        <end position="297"/>
    </location>
    <ligand>
        <name>substrate</name>
    </ligand>
</feature>
<feature type="binding site" evidence="1">
    <location>
        <position position="296"/>
    </location>
    <ligand>
        <name>NAD(+)</name>
        <dbReference type="ChEBI" id="CHEBI:57540"/>
    </ligand>
</feature>
<feature type="binding site" evidence="1">
    <location>
        <position position="325"/>
    </location>
    <ligand>
        <name>NAD(+)</name>
        <dbReference type="ChEBI" id="CHEBI:57540"/>
    </ligand>
</feature>
<feature type="modified residue" description="Phosphoserine" evidence="2">
    <location>
        <position position="376"/>
    </location>
</feature>
<feature type="modified residue" description="Phosphothreonine" evidence="2">
    <location>
        <position position="382"/>
    </location>
</feature>
<feature type="sequence conflict" description="In Ref. 1; CAA39630." evidence="3" ref="1">
    <original>SKV</original>
    <variation>GKG</variation>
    <location>
        <begin position="54"/>
        <end position="56"/>
    </location>
</feature>
<feature type="sequence conflict" description="In Ref. 1; CAA39630." evidence="3" ref="1">
    <original>CD</original>
    <variation>WH</variation>
    <location>
        <begin position="126"/>
        <end position="127"/>
    </location>
</feature>
<feature type="sequence conflict" description="In Ref. 1; CAA39630." evidence="3" ref="1">
    <location>
        <position position="153"/>
    </location>
</feature>
<feature type="sequence conflict" description="In Ref. 1; CAA39630." evidence="3" ref="1">
    <original>R</original>
    <variation>S</variation>
    <location>
        <position position="154"/>
    </location>
</feature>
<feature type="sequence conflict" description="In Ref. 1; CAA39630." evidence="3" ref="1">
    <original>F</original>
    <variation>S</variation>
    <location>
        <position position="209"/>
    </location>
</feature>
<proteinExistence type="evidence at protein level"/>